<accession>O31538</accession>
<reference key="1">
    <citation type="journal article" date="1997" name="Nature">
        <title>The complete genome sequence of the Gram-positive bacterium Bacillus subtilis.</title>
        <authorList>
            <person name="Kunst F."/>
            <person name="Ogasawara N."/>
            <person name="Moszer I."/>
            <person name="Albertini A.M."/>
            <person name="Alloni G."/>
            <person name="Azevedo V."/>
            <person name="Bertero M.G."/>
            <person name="Bessieres P."/>
            <person name="Bolotin A."/>
            <person name="Borchert S."/>
            <person name="Borriss R."/>
            <person name="Boursier L."/>
            <person name="Brans A."/>
            <person name="Braun M."/>
            <person name="Brignell S.C."/>
            <person name="Bron S."/>
            <person name="Brouillet S."/>
            <person name="Bruschi C.V."/>
            <person name="Caldwell B."/>
            <person name="Capuano V."/>
            <person name="Carter N.M."/>
            <person name="Choi S.-K."/>
            <person name="Codani J.-J."/>
            <person name="Connerton I.F."/>
            <person name="Cummings N.J."/>
            <person name="Daniel R.A."/>
            <person name="Denizot F."/>
            <person name="Devine K.M."/>
            <person name="Duesterhoeft A."/>
            <person name="Ehrlich S.D."/>
            <person name="Emmerson P.T."/>
            <person name="Entian K.-D."/>
            <person name="Errington J."/>
            <person name="Fabret C."/>
            <person name="Ferrari E."/>
            <person name="Foulger D."/>
            <person name="Fritz C."/>
            <person name="Fujita M."/>
            <person name="Fujita Y."/>
            <person name="Fuma S."/>
            <person name="Galizzi A."/>
            <person name="Galleron N."/>
            <person name="Ghim S.-Y."/>
            <person name="Glaser P."/>
            <person name="Goffeau A."/>
            <person name="Golightly E.J."/>
            <person name="Grandi G."/>
            <person name="Guiseppi G."/>
            <person name="Guy B.J."/>
            <person name="Haga K."/>
            <person name="Haiech J."/>
            <person name="Harwood C.R."/>
            <person name="Henaut A."/>
            <person name="Hilbert H."/>
            <person name="Holsappel S."/>
            <person name="Hosono S."/>
            <person name="Hullo M.-F."/>
            <person name="Itaya M."/>
            <person name="Jones L.-M."/>
            <person name="Joris B."/>
            <person name="Karamata D."/>
            <person name="Kasahara Y."/>
            <person name="Klaerr-Blanchard M."/>
            <person name="Klein C."/>
            <person name="Kobayashi Y."/>
            <person name="Koetter P."/>
            <person name="Koningstein G."/>
            <person name="Krogh S."/>
            <person name="Kumano M."/>
            <person name="Kurita K."/>
            <person name="Lapidus A."/>
            <person name="Lardinois S."/>
            <person name="Lauber J."/>
            <person name="Lazarevic V."/>
            <person name="Lee S.-M."/>
            <person name="Levine A."/>
            <person name="Liu H."/>
            <person name="Masuda S."/>
            <person name="Mauel C."/>
            <person name="Medigue C."/>
            <person name="Medina N."/>
            <person name="Mellado R.P."/>
            <person name="Mizuno M."/>
            <person name="Moestl D."/>
            <person name="Nakai S."/>
            <person name="Noback M."/>
            <person name="Noone D."/>
            <person name="O'Reilly M."/>
            <person name="Ogawa K."/>
            <person name="Ogiwara A."/>
            <person name="Oudega B."/>
            <person name="Park S.-H."/>
            <person name="Parro V."/>
            <person name="Pohl T.M."/>
            <person name="Portetelle D."/>
            <person name="Porwollik S."/>
            <person name="Prescott A.M."/>
            <person name="Presecan E."/>
            <person name="Pujic P."/>
            <person name="Purnelle B."/>
            <person name="Rapoport G."/>
            <person name="Rey M."/>
            <person name="Reynolds S."/>
            <person name="Rieger M."/>
            <person name="Rivolta C."/>
            <person name="Rocha E."/>
            <person name="Roche B."/>
            <person name="Rose M."/>
            <person name="Sadaie Y."/>
            <person name="Sato T."/>
            <person name="Scanlan E."/>
            <person name="Schleich S."/>
            <person name="Schroeter R."/>
            <person name="Scoffone F."/>
            <person name="Sekiguchi J."/>
            <person name="Sekowska A."/>
            <person name="Seror S.J."/>
            <person name="Serror P."/>
            <person name="Shin B.-S."/>
            <person name="Soldo B."/>
            <person name="Sorokin A."/>
            <person name="Tacconi E."/>
            <person name="Takagi T."/>
            <person name="Takahashi H."/>
            <person name="Takemaru K."/>
            <person name="Takeuchi M."/>
            <person name="Tamakoshi A."/>
            <person name="Tanaka T."/>
            <person name="Terpstra P."/>
            <person name="Tognoni A."/>
            <person name="Tosato V."/>
            <person name="Uchiyama S."/>
            <person name="Vandenbol M."/>
            <person name="Vannier F."/>
            <person name="Vassarotti A."/>
            <person name="Viari A."/>
            <person name="Wambutt R."/>
            <person name="Wedler E."/>
            <person name="Wedler H."/>
            <person name="Weitzenegger T."/>
            <person name="Winters P."/>
            <person name="Wipat A."/>
            <person name="Yamamoto H."/>
            <person name="Yamane K."/>
            <person name="Yasumoto K."/>
            <person name="Yata K."/>
            <person name="Yoshida K."/>
            <person name="Yoshikawa H.-F."/>
            <person name="Zumstein E."/>
            <person name="Yoshikawa H."/>
            <person name="Danchin A."/>
        </authorList>
    </citation>
    <scope>NUCLEOTIDE SEQUENCE [LARGE SCALE GENOMIC DNA]</scope>
    <source>
        <strain>168</strain>
    </source>
</reference>
<gene>
    <name type="primary">yezD</name>
    <name type="ordered locus">BSU07190</name>
</gene>
<proteinExistence type="predicted"/>
<name>YEZD_BACSU</name>
<dbReference type="EMBL" id="AL009126">
    <property type="protein sequence ID" value="CAB12538.1"/>
    <property type="molecule type" value="Genomic_DNA"/>
</dbReference>
<dbReference type="PIR" id="A69800">
    <property type="entry name" value="A69800"/>
</dbReference>
<dbReference type="RefSeq" id="NP_388600.1">
    <property type="nucleotide sequence ID" value="NC_000964.3"/>
</dbReference>
<dbReference type="RefSeq" id="WP_003244522.1">
    <property type="nucleotide sequence ID" value="NZ_OZ025638.1"/>
</dbReference>
<dbReference type="SMR" id="O31538"/>
<dbReference type="FunCoup" id="O31538">
    <property type="interactions" value="74"/>
</dbReference>
<dbReference type="STRING" id="224308.BSU07190"/>
<dbReference type="PaxDb" id="224308-BSU07190"/>
<dbReference type="EnsemblBacteria" id="CAB12538">
    <property type="protein sequence ID" value="CAB12538"/>
    <property type="gene ID" value="BSU_07190"/>
</dbReference>
<dbReference type="GeneID" id="938773"/>
<dbReference type="KEGG" id="bsu:BSU07190"/>
<dbReference type="PATRIC" id="fig|224308.179.peg.780"/>
<dbReference type="eggNOG" id="COG5583">
    <property type="taxonomic scope" value="Bacteria"/>
</dbReference>
<dbReference type="InParanoid" id="O31538"/>
<dbReference type="OrthoDB" id="2382414at2"/>
<dbReference type="BioCyc" id="BSUB:BSU07190-MONOMER"/>
<dbReference type="Proteomes" id="UP000001570">
    <property type="component" value="Chromosome"/>
</dbReference>
<dbReference type="InterPro" id="IPR018743">
    <property type="entry name" value="DUF2292"/>
</dbReference>
<dbReference type="Pfam" id="PF10055">
    <property type="entry name" value="DUF2292"/>
    <property type="match status" value="1"/>
</dbReference>
<sequence length="55" mass="6342">MVSKSTIDPEVIEKIISSLETLDFGTVQITVHDSQITQIEKIEKHRFSLKRKESK</sequence>
<protein>
    <recommendedName>
        <fullName>Uncharacterized protein YezD</fullName>
    </recommendedName>
</protein>
<feature type="chain" id="PRO_0000372589" description="Uncharacterized protein YezD">
    <location>
        <begin position="1"/>
        <end position="55"/>
    </location>
</feature>
<organism>
    <name type="scientific">Bacillus subtilis (strain 168)</name>
    <dbReference type="NCBI Taxonomy" id="224308"/>
    <lineage>
        <taxon>Bacteria</taxon>
        <taxon>Bacillati</taxon>
        <taxon>Bacillota</taxon>
        <taxon>Bacilli</taxon>
        <taxon>Bacillales</taxon>
        <taxon>Bacillaceae</taxon>
        <taxon>Bacillus</taxon>
    </lineage>
</organism>
<keyword id="KW-1185">Reference proteome</keyword>